<keyword id="KW-0067">ATP-binding</keyword>
<keyword id="KW-0963">Cytoplasm</keyword>
<keyword id="KW-0418">Kinase</keyword>
<keyword id="KW-0547">Nucleotide-binding</keyword>
<keyword id="KW-1185">Reference proteome</keyword>
<keyword id="KW-0808">Transferase</keyword>
<dbReference type="EC" id="2.7.4.8" evidence="1"/>
<dbReference type="EMBL" id="CP000127">
    <property type="protein sequence ID" value="ABA57713.1"/>
    <property type="molecule type" value="Genomic_DNA"/>
</dbReference>
<dbReference type="RefSeq" id="WP_002809509.1">
    <property type="nucleotide sequence ID" value="NC_007484.1"/>
</dbReference>
<dbReference type="SMR" id="Q3JBT3"/>
<dbReference type="FunCoup" id="Q3JBT3">
    <property type="interactions" value="485"/>
</dbReference>
<dbReference type="STRING" id="323261.Noc_1212"/>
<dbReference type="KEGG" id="noc:Noc_1212"/>
<dbReference type="eggNOG" id="COG0194">
    <property type="taxonomic scope" value="Bacteria"/>
</dbReference>
<dbReference type="HOGENOM" id="CLU_001715_1_0_6"/>
<dbReference type="InParanoid" id="Q3JBT3"/>
<dbReference type="Proteomes" id="UP000006838">
    <property type="component" value="Chromosome"/>
</dbReference>
<dbReference type="GO" id="GO:0005829">
    <property type="term" value="C:cytosol"/>
    <property type="evidence" value="ECO:0007669"/>
    <property type="project" value="TreeGrafter"/>
</dbReference>
<dbReference type="GO" id="GO:0005524">
    <property type="term" value="F:ATP binding"/>
    <property type="evidence" value="ECO:0007669"/>
    <property type="project" value="UniProtKB-UniRule"/>
</dbReference>
<dbReference type="GO" id="GO:0004385">
    <property type="term" value="F:guanylate kinase activity"/>
    <property type="evidence" value="ECO:0007669"/>
    <property type="project" value="UniProtKB-UniRule"/>
</dbReference>
<dbReference type="CDD" id="cd00071">
    <property type="entry name" value="GMPK"/>
    <property type="match status" value="1"/>
</dbReference>
<dbReference type="FunFam" id="3.30.63.10:FF:000002">
    <property type="entry name" value="Guanylate kinase 1"/>
    <property type="match status" value="1"/>
</dbReference>
<dbReference type="Gene3D" id="3.30.63.10">
    <property type="entry name" value="Guanylate Kinase phosphate binding domain"/>
    <property type="match status" value="1"/>
</dbReference>
<dbReference type="Gene3D" id="3.40.50.300">
    <property type="entry name" value="P-loop containing nucleotide triphosphate hydrolases"/>
    <property type="match status" value="2"/>
</dbReference>
<dbReference type="HAMAP" id="MF_00328">
    <property type="entry name" value="Guanylate_kinase"/>
    <property type="match status" value="1"/>
</dbReference>
<dbReference type="InterPro" id="IPR008145">
    <property type="entry name" value="GK/Ca_channel_bsu"/>
</dbReference>
<dbReference type="InterPro" id="IPR008144">
    <property type="entry name" value="Guanylate_kin-like_dom"/>
</dbReference>
<dbReference type="InterPro" id="IPR017665">
    <property type="entry name" value="Guanylate_kinase"/>
</dbReference>
<dbReference type="InterPro" id="IPR020590">
    <property type="entry name" value="Guanylate_kinase_CS"/>
</dbReference>
<dbReference type="InterPro" id="IPR027417">
    <property type="entry name" value="P-loop_NTPase"/>
</dbReference>
<dbReference type="NCBIfam" id="TIGR03263">
    <property type="entry name" value="guanyl_kin"/>
    <property type="match status" value="1"/>
</dbReference>
<dbReference type="PANTHER" id="PTHR23117:SF13">
    <property type="entry name" value="GUANYLATE KINASE"/>
    <property type="match status" value="1"/>
</dbReference>
<dbReference type="PANTHER" id="PTHR23117">
    <property type="entry name" value="GUANYLATE KINASE-RELATED"/>
    <property type="match status" value="1"/>
</dbReference>
<dbReference type="Pfam" id="PF00625">
    <property type="entry name" value="Guanylate_kin"/>
    <property type="match status" value="1"/>
</dbReference>
<dbReference type="SMART" id="SM00072">
    <property type="entry name" value="GuKc"/>
    <property type="match status" value="1"/>
</dbReference>
<dbReference type="SUPFAM" id="SSF52540">
    <property type="entry name" value="P-loop containing nucleoside triphosphate hydrolases"/>
    <property type="match status" value="1"/>
</dbReference>
<dbReference type="PROSITE" id="PS00856">
    <property type="entry name" value="GUANYLATE_KINASE_1"/>
    <property type="match status" value="1"/>
</dbReference>
<dbReference type="PROSITE" id="PS50052">
    <property type="entry name" value="GUANYLATE_KINASE_2"/>
    <property type="match status" value="1"/>
</dbReference>
<organism>
    <name type="scientific">Nitrosococcus oceani (strain ATCC 19707 / BCRC 17464 / JCM 30415 / NCIMB 11848 / C-107)</name>
    <dbReference type="NCBI Taxonomy" id="323261"/>
    <lineage>
        <taxon>Bacteria</taxon>
        <taxon>Pseudomonadati</taxon>
        <taxon>Pseudomonadota</taxon>
        <taxon>Gammaproteobacteria</taxon>
        <taxon>Chromatiales</taxon>
        <taxon>Chromatiaceae</taxon>
        <taxon>Nitrosococcus</taxon>
    </lineage>
</organism>
<name>KGUA_NITOC</name>
<sequence>MSGSLFIVAAPSGAGKTSLVKALAASMADIRLSISHTTRPPRPGEQDGMDYHFVTEAIFETMEGGGGFLEHAQVFGHRYGTAKESVLPLLAQGMDVILEIDWQGRRQVQAQFPHCVSIFILPPSRETLEHRLRLRGQDTEAVVARRMGDACAEISHYNEFDYLVVNDDFEVAHTDLRAIVQSRRLLRLRQEKRLKSLLGELLE</sequence>
<accession>Q3JBT3</accession>
<reference key="1">
    <citation type="journal article" date="2006" name="Appl. Environ. Microbiol.">
        <title>Complete genome sequence of the marine, chemolithoautotrophic, ammonia-oxidizing bacterium Nitrosococcus oceani ATCC 19707.</title>
        <authorList>
            <person name="Klotz M.G."/>
            <person name="Arp D.J."/>
            <person name="Chain P.S.G."/>
            <person name="El-Sheikh A.F."/>
            <person name="Hauser L.J."/>
            <person name="Hommes N.G."/>
            <person name="Larimer F.W."/>
            <person name="Malfatti S.A."/>
            <person name="Norton J.M."/>
            <person name="Poret-Peterson A.T."/>
            <person name="Vergez L.M."/>
            <person name="Ward B.B."/>
        </authorList>
    </citation>
    <scope>NUCLEOTIDE SEQUENCE [LARGE SCALE GENOMIC DNA]</scope>
    <source>
        <strain>ATCC 19707 / BCRC 17464 / JCM 30415 / NCIMB 11848 / C-107</strain>
    </source>
</reference>
<evidence type="ECO:0000255" key="1">
    <source>
        <dbReference type="HAMAP-Rule" id="MF_00328"/>
    </source>
</evidence>
<gene>
    <name evidence="1" type="primary">gmk</name>
    <name type="ordered locus">Noc_1212</name>
</gene>
<protein>
    <recommendedName>
        <fullName evidence="1">Guanylate kinase</fullName>
        <ecNumber evidence="1">2.7.4.8</ecNumber>
    </recommendedName>
    <alternativeName>
        <fullName evidence="1">GMP kinase</fullName>
    </alternativeName>
</protein>
<comment type="function">
    <text evidence="1">Essential for recycling GMP and indirectly, cGMP.</text>
</comment>
<comment type="catalytic activity">
    <reaction evidence="1">
        <text>GMP + ATP = GDP + ADP</text>
        <dbReference type="Rhea" id="RHEA:20780"/>
        <dbReference type="ChEBI" id="CHEBI:30616"/>
        <dbReference type="ChEBI" id="CHEBI:58115"/>
        <dbReference type="ChEBI" id="CHEBI:58189"/>
        <dbReference type="ChEBI" id="CHEBI:456216"/>
        <dbReference type="EC" id="2.7.4.8"/>
    </reaction>
</comment>
<comment type="subcellular location">
    <subcellularLocation>
        <location evidence="1">Cytoplasm</location>
    </subcellularLocation>
</comment>
<comment type="similarity">
    <text evidence="1">Belongs to the guanylate kinase family.</text>
</comment>
<feature type="chain" id="PRO_0000266360" description="Guanylate kinase">
    <location>
        <begin position="1"/>
        <end position="203"/>
    </location>
</feature>
<feature type="domain" description="Guanylate kinase-like" evidence="1">
    <location>
        <begin position="3"/>
        <end position="181"/>
    </location>
</feature>
<feature type="binding site" evidence="1">
    <location>
        <begin position="10"/>
        <end position="17"/>
    </location>
    <ligand>
        <name>ATP</name>
        <dbReference type="ChEBI" id="CHEBI:30616"/>
    </ligand>
</feature>
<proteinExistence type="inferred from homology"/>